<evidence type="ECO:0000250" key="1"/>
<evidence type="ECO:0000250" key="2">
    <source>
        <dbReference type="UniProtKB" id="Q81870"/>
    </source>
</evidence>
<evidence type="ECO:0000256" key="3">
    <source>
        <dbReference type="SAM" id="MobiDB-lite"/>
    </source>
</evidence>
<evidence type="ECO:0000305" key="4"/>
<organismHost>
    <name type="scientific">Bandicota bengalensis</name>
    <name type="common">lesser bandicoot rat</name>
    <dbReference type="NCBI Taxonomy" id="69079"/>
</organismHost>
<organismHost>
    <name type="scientific">Callithrix</name>
    <dbReference type="NCBI Taxonomy" id="9481"/>
</organismHost>
<organismHost>
    <name type="scientific">Cercopithecus hamlyni</name>
    <name type="common">Owl-faced monkey</name>
    <name type="synonym">Hamlyn's monkey</name>
    <dbReference type="NCBI Taxonomy" id="9536"/>
</organismHost>
<organismHost>
    <name type="scientific">Chlorocebus aethiops</name>
    <name type="common">Green monkey</name>
    <name type="synonym">Cercopithecus aethiops</name>
    <dbReference type="NCBI Taxonomy" id="9534"/>
</organismHost>
<organismHost>
    <name type="scientific">Gallus gallus</name>
    <name type="common">Chicken</name>
    <dbReference type="NCBI Taxonomy" id="9031"/>
</organismHost>
<organismHost>
    <name type="scientific">Homo sapiens</name>
    <name type="common">Human</name>
    <dbReference type="NCBI Taxonomy" id="9606"/>
</organismHost>
<organismHost>
    <name type="scientific">Macaca</name>
    <name type="common">macaques</name>
    <dbReference type="NCBI Taxonomy" id="9539"/>
</organismHost>
<organismHost>
    <name type="scientific">Mus musculus</name>
    <name type="common">Mouse</name>
    <dbReference type="NCBI Taxonomy" id="10090"/>
</organismHost>
<organismHost>
    <name type="scientific">Pan troglodytes</name>
    <name type="common">Chimpanzee</name>
    <dbReference type="NCBI Taxonomy" id="9598"/>
</organismHost>
<organismHost>
    <name type="scientific">Saimiri</name>
    <name type="common">squirrel monkeys</name>
    <dbReference type="NCBI Taxonomy" id="9520"/>
</organismHost>
<organismHost>
    <name type="scientific">Sus scrofa</name>
    <name type="common">Pig</name>
    <dbReference type="NCBI Taxonomy" id="9823"/>
</organismHost>
<reference key="1">
    <citation type="journal article" date="2000" name="J. Gen. Virol.">
        <title>The complete sequence of hepatitis E virus genotype 4 reveals an alternative strategy for translation of open reading frames 2 and 3.</title>
        <authorList>
            <person name="Wang Y."/>
            <person name="Zhang H."/>
            <person name="Ling R."/>
            <person name="Li H."/>
            <person name="Harrison T.J."/>
        </authorList>
    </citation>
    <scope>NUCLEOTIDE SEQUENCE [GENOMIC RNA]</scope>
</reference>
<feature type="chain" id="PRO_0000334541" description="Protein ORF3">
    <location>
        <begin position="1"/>
        <end position="112"/>
    </location>
</feature>
<feature type="region of interest" description="Hydrophobic">
    <location>
        <begin position="7"/>
        <end position="23"/>
    </location>
</feature>
<feature type="region of interest" description="Interaction with host HPX" evidence="1">
    <location>
        <begin position="28"/>
        <end position="66"/>
    </location>
</feature>
<feature type="region of interest" description="Hydrophobic">
    <location>
        <begin position="40"/>
        <end position="60"/>
    </location>
</feature>
<feature type="region of interest" description="Homodimerization, and interaction with host AMBP/bikunin" evidence="1">
    <location>
        <begin position="70"/>
        <end position="112"/>
    </location>
</feature>
<feature type="region of interest" description="Disordered" evidence="3">
    <location>
        <begin position="89"/>
        <end position="112"/>
    </location>
</feature>
<feature type="region of interest" description="Interaction with host SRC, HCK, FYN, PIK3R3 and GRB2" evidence="1">
    <location>
        <begin position="93"/>
        <end position="102"/>
    </location>
</feature>
<feature type="short sequence motif" description="PTAP/PSAP motif" evidence="2">
    <location>
        <begin position="94"/>
        <end position="97"/>
    </location>
</feature>
<sequence>MEMPPCALGLFCFCSSCFCLCCPRHRPVSRLAVAAGKRGAAVVSGVTGLILSPSPSPIFIQPTPSHLTFQPPPGLELALGSQSVHSAPLGVTSPSAPPLPPVVDLPQLGLRR</sequence>
<organism>
    <name type="scientific">Hepatitis E virus genotype 4 (isolate Human/China/T1)</name>
    <name type="common">HEV-4</name>
    <name type="synonym">Hepatitis E virus genotype 4 (isolate Human/China/Ct1)</name>
    <dbReference type="NCBI Taxonomy" id="509627"/>
    <lineage>
        <taxon>Viruses</taxon>
        <taxon>Riboviria</taxon>
        <taxon>Orthornavirae</taxon>
        <taxon>Kitrinoviricota</taxon>
        <taxon>Alsuviricetes</taxon>
        <taxon>Hepelivirales</taxon>
        <taxon>Hepeviridae</taxon>
        <taxon>Orthohepevirinae</taxon>
        <taxon>Paslahepevirus</taxon>
        <taxon>Hepatitis E virus</taxon>
    </lineage>
</organism>
<name>ORF3_HEVCT</name>
<comment type="function">
    <text evidence="2">Small multifunctional phosphoprotein involved in virion morphogenesis, egress and counteracting host innate immunity. Plays critical roles in the final steps of viral release by interacting with host TSG101, a member of the vacuolar protein-sorting pathway and using other cellular host proteins involved in vesicle formation pathway. Also acts as a viroporin and forms ion conductive pores allowing viral particle release. Impairs the generation of type I interferon by down-regulating host TLR3 and TLR7 as well as their downstream signaling pathways. Down-regulates the phosphorylation of host IRF3 via the interaction with host SIRP-alpha, thereby inhibiting IFN-I expression. Interacts with host microtubules.</text>
</comment>
<comment type="subunit">
    <text evidence="2">Forms homooligomers (By similarity). Interacts with host SRC, HCK, FYN, PIK3R3 and GRB2 (via SH3 domain); binding does not activate the kinases (By similarity). Interacts with host AMBP/bikunin and AMBP/alpha-1-microglobulin peptides (By similarity). Interacts with host HPX/hemopexin. Interacts (when phosphorylated) with capsid protein ORF2 (By similarity). Interacts with host TSG101; this interaction plays a role in viral release from the host cell (By similarity). Interacts with host SIRPA; this interaction down-regulates the phosphorylation of host IRF3 (By similarity).</text>
</comment>
<comment type="subcellular location">
    <subcellularLocation>
        <location evidence="2">Host endoplasmic reticulum membrane</location>
        <topology evidence="2">Lipid-anchor</topology>
    </subcellularLocation>
    <subcellularLocation>
        <location evidence="2">Host cytoplasm</location>
        <location evidence="2">Host cytoskeleton</location>
    </subcellularLocation>
    <subcellularLocation>
        <location evidence="2">Virion</location>
    </subcellularLocation>
    <subcellularLocation>
        <location evidence="2">Host cell membrane</location>
        <topology evidence="2">Lipid-anchor</topology>
    </subcellularLocation>
    <text evidence="2">The N-terminal region seems to associate with the cytoskeleton probably via one of its hydrophobic regions. Present on the surface of the membrane-wrapped virions.</text>
</comment>
<comment type="domain">
    <text evidence="2">The PSAP motif is necessary for the release of membrane-wrapped virions from infected cells.</text>
</comment>
<comment type="PTM">
    <text evidence="2">Palmitoylated in the N-terminus.</text>
</comment>
<comment type="miscellaneous">
    <text evidence="2">The viral particles present in feces and bile are non-enveloped, while those in circulating blood and culture supernatants are covered with a cellular membrane (quasi-enveloped).</text>
</comment>
<comment type="similarity">
    <text evidence="4">Belongs to the hepevirus ORF3 protein family.</text>
</comment>
<accession>Q9IVZ7</accession>
<protein>
    <recommendedName>
        <fullName>Protein ORF3</fullName>
        <shortName>pORF3</shortName>
    </recommendedName>
</protein>
<gene>
    <name type="ORF">ORF3</name>
</gene>
<keyword id="KW-1032">Host cell membrane</keyword>
<keyword id="KW-1035">Host cytoplasm</keyword>
<keyword id="KW-1037">Host cytoskeleton</keyword>
<keyword id="KW-1038">Host endoplasmic reticulum</keyword>
<keyword id="KW-1043">Host membrane</keyword>
<keyword id="KW-0945">Host-virus interaction</keyword>
<keyword id="KW-0449">Lipoprotein</keyword>
<keyword id="KW-0472">Membrane</keyword>
<keyword id="KW-0946">Virion</keyword>
<dbReference type="EMBL" id="AJ272108">
    <property type="protein sequence ID" value="CAB83211.1"/>
    <property type="molecule type" value="Genomic_RNA"/>
</dbReference>
<dbReference type="Proteomes" id="UP000007242">
    <property type="component" value="Genome"/>
</dbReference>
<dbReference type="GO" id="GO:0044167">
    <property type="term" value="C:host cell endoplasmic reticulum membrane"/>
    <property type="evidence" value="ECO:0007669"/>
    <property type="project" value="UniProtKB-SubCell"/>
</dbReference>
<dbReference type="GO" id="GO:0020002">
    <property type="term" value="C:host cell plasma membrane"/>
    <property type="evidence" value="ECO:0007669"/>
    <property type="project" value="UniProtKB-SubCell"/>
</dbReference>
<dbReference type="GO" id="GO:0044163">
    <property type="term" value="C:host cytoskeleton"/>
    <property type="evidence" value="ECO:0007669"/>
    <property type="project" value="UniProtKB-SubCell"/>
</dbReference>
<dbReference type="GO" id="GO:0016020">
    <property type="term" value="C:membrane"/>
    <property type="evidence" value="ECO:0007669"/>
    <property type="project" value="UniProtKB-KW"/>
</dbReference>
<dbReference type="GO" id="GO:0044423">
    <property type="term" value="C:virion component"/>
    <property type="evidence" value="ECO:0007669"/>
    <property type="project" value="UniProtKB-KW"/>
</dbReference>
<dbReference type="InterPro" id="IPR003384">
    <property type="entry name" value="HEV_Orf2"/>
</dbReference>
<dbReference type="Pfam" id="PF02444">
    <property type="entry name" value="HEV_ORF1"/>
    <property type="match status" value="1"/>
</dbReference>
<proteinExistence type="inferred from homology"/>